<name>RIMK2_SHESW</name>
<sequence length="301" mass="32483">MRIAILSQGPELYSTKRLVEAAQLRGHEVHVINPLECYMNINMRQSSIHIGGRELPTFDAVIPRIGASITFYGSAVLRQFEMMGVYALNDSVGISRSRDKLRSMQLMSRRGIGLPITGFANKPSDIPDLIDMVGGAPLVIKLLEGTQGIGVVLAETRKAAESVIEAFMGLKANIMVQEYIKEANGADIRCFVLGDKVIAAMKRQAMPGEFRSNLHRGGTASLVKLTPEERSVAIRAAKTMGLNVAGVDLLRSNHGPVIMEVNSSPGLEGIEGATTKDVAGAIIEFVEKNVTKVKKVTQAQG</sequence>
<evidence type="ECO:0000255" key="1">
    <source>
        <dbReference type="HAMAP-Rule" id="MF_01552"/>
    </source>
</evidence>
<protein>
    <recommendedName>
        <fullName evidence="1">Probable alpha-L-glutamate ligase 2</fullName>
        <ecNumber evidence="1">6.3.2.-</ecNumber>
    </recommendedName>
</protein>
<proteinExistence type="inferred from homology"/>
<accession>A1RJ58</accession>
<gene>
    <name evidence="1" type="primary">rimK2</name>
    <name type="ordered locus">Sputw3181_1868</name>
</gene>
<dbReference type="EC" id="6.3.2.-" evidence="1"/>
<dbReference type="EMBL" id="CP000503">
    <property type="protein sequence ID" value="ABM24703.1"/>
    <property type="molecule type" value="Genomic_DNA"/>
</dbReference>
<dbReference type="SMR" id="A1RJ58"/>
<dbReference type="KEGG" id="shw:Sputw3181_1868"/>
<dbReference type="HOGENOM" id="CLU_054353_0_1_6"/>
<dbReference type="Proteomes" id="UP000002597">
    <property type="component" value="Chromosome"/>
</dbReference>
<dbReference type="GO" id="GO:0005737">
    <property type="term" value="C:cytoplasm"/>
    <property type="evidence" value="ECO:0007669"/>
    <property type="project" value="TreeGrafter"/>
</dbReference>
<dbReference type="GO" id="GO:0005524">
    <property type="term" value="F:ATP binding"/>
    <property type="evidence" value="ECO:0007669"/>
    <property type="project" value="UniProtKB-UniRule"/>
</dbReference>
<dbReference type="GO" id="GO:0046872">
    <property type="term" value="F:metal ion binding"/>
    <property type="evidence" value="ECO:0007669"/>
    <property type="project" value="UniProtKB-KW"/>
</dbReference>
<dbReference type="GO" id="GO:0018169">
    <property type="term" value="F:ribosomal S6-glutamic acid ligase activity"/>
    <property type="evidence" value="ECO:0007669"/>
    <property type="project" value="TreeGrafter"/>
</dbReference>
<dbReference type="GO" id="GO:0036211">
    <property type="term" value="P:protein modification process"/>
    <property type="evidence" value="ECO:0007669"/>
    <property type="project" value="InterPro"/>
</dbReference>
<dbReference type="GO" id="GO:0009432">
    <property type="term" value="P:SOS response"/>
    <property type="evidence" value="ECO:0007669"/>
    <property type="project" value="TreeGrafter"/>
</dbReference>
<dbReference type="GO" id="GO:0006412">
    <property type="term" value="P:translation"/>
    <property type="evidence" value="ECO:0007669"/>
    <property type="project" value="UniProtKB-KW"/>
</dbReference>
<dbReference type="FunFam" id="3.40.50.20:FF:000004">
    <property type="entry name" value="Probable alpha-L-glutamate ligase"/>
    <property type="match status" value="1"/>
</dbReference>
<dbReference type="FunFam" id="3.30.1490.20:FF:000005">
    <property type="entry name" value="Probable alpha-L-glutamate ligase 1"/>
    <property type="match status" value="1"/>
</dbReference>
<dbReference type="FunFam" id="3.30.470.20:FF:000016">
    <property type="entry name" value="Ribosomal protein S6--L-glutamate ligase"/>
    <property type="match status" value="1"/>
</dbReference>
<dbReference type="Gene3D" id="3.40.50.20">
    <property type="match status" value="1"/>
</dbReference>
<dbReference type="Gene3D" id="3.30.1490.20">
    <property type="entry name" value="ATP-grasp fold, A domain"/>
    <property type="match status" value="1"/>
</dbReference>
<dbReference type="Gene3D" id="3.30.470.20">
    <property type="entry name" value="ATP-grasp fold, B domain"/>
    <property type="match status" value="1"/>
</dbReference>
<dbReference type="HAMAP" id="MF_01552">
    <property type="entry name" value="RimK"/>
    <property type="match status" value="1"/>
</dbReference>
<dbReference type="InterPro" id="IPR011761">
    <property type="entry name" value="ATP-grasp"/>
</dbReference>
<dbReference type="InterPro" id="IPR013651">
    <property type="entry name" value="ATP-grasp_RimK-type"/>
</dbReference>
<dbReference type="InterPro" id="IPR013815">
    <property type="entry name" value="ATP_grasp_subdomain_1"/>
</dbReference>
<dbReference type="InterPro" id="IPR023533">
    <property type="entry name" value="RimK"/>
</dbReference>
<dbReference type="InterPro" id="IPR041107">
    <property type="entry name" value="Rimk_N"/>
</dbReference>
<dbReference type="InterPro" id="IPR004666">
    <property type="entry name" value="Rp_bS6_RimK/Lys_biosynth_LsyX"/>
</dbReference>
<dbReference type="NCBIfam" id="NF007764">
    <property type="entry name" value="PRK10446.1"/>
    <property type="match status" value="1"/>
</dbReference>
<dbReference type="NCBIfam" id="TIGR00768">
    <property type="entry name" value="rimK_fam"/>
    <property type="match status" value="1"/>
</dbReference>
<dbReference type="PANTHER" id="PTHR21621:SF7">
    <property type="entry name" value="RIBOSOMAL PROTEIN BS6--L-GLUTAMATE LIGASE"/>
    <property type="match status" value="1"/>
</dbReference>
<dbReference type="PANTHER" id="PTHR21621">
    <property type="entry name" value="RIBOSOMAL PROTEIN S6 MODIFICATION PROTEIN"/>
    <property type="match status" value="1"/>
</dbReference>
<dbReference type="Pfam" id="PF08443">
    <property type="entry name" value="RimK"/>
    <property type="match status" value="1"/>
</dbReference>
<dbReference type="Pfam" id="PF18030">
    <property type="entry name" value="Rimk_N"/>
    <property type="match status" value="1"/>
</dbReference>
<dbReference type="SUPFAM" id="SSF56059">
    <property type="entry name" value="Glutathione synthetase ATP-binding domain-like"/>
    <property type="match status" value="1"/>
</dbReference>
<dbReference type="PROSITE" id="PS50975">
    <property type="entry name" value="ATP_GRASP"/>
    <property type="match status" value="1"/>
</dbReference>
<reference key="1">
    <citation type="submission" date="2006-12" db="EMBL/GenBank/DDBJ databases">
        <title>Complete sequence of Shewanella sp. W3-18-1.</title>
        <authorList>
            <consortium name="US DOE Joint Genome Institute"/>
            <person name="Copeland A."/>
            <person name="Lucas S."/>
            <person name="Lapidus A."/>
            <person name="Barry K."/>
            <person name="Detter J.C."/>
            <person name="Glavina del Rio T."/>
            <person name="Hammon N."/>
            <person name="Israni S."/>
            <person name="Dalin E."/>
            <person name="Tice H."/>
            <person name="Pitluck S."/>
            <person name="Chain P."/>
            <person name="Malfatti S."/>
            <person name="Shin M."/>
            <person name="Vergez L."/>
            <person name="Schmutz J."/>
            <person name="Larimer F."/>
            <person name="Land M."/>
            <person name="Hauser L."/>
            <person name="Kyrpides N."/>
            <person name="Lykidis A."/>
            <person name="Tiedje J."/>
            <person name="Richardson P."/>
        </authorList>
    </citation>
    <scope>NUCLEOTIDE SEQUENCE [LARGE SCALE GENOMIC DNA]</scope>
    <source>
        <strain>W3-18-1</strain>
    </source>
</reference>
<feature type="chain" id="PRO_0000340567" description="Probable alpha-L-glutamate ligase 2">
    <location>
        <begin position="1"/>
        <end position="301"/>
    </location>
</feature>
<feature type="domain" description="ATP-grasp" evidence="1">
    <location>
        <begin position="104"/>
        <end position="287"/>
    </location>
</feature>
<feature type="binding site" evidence="1">
    <location>
        <position position="141"/>
    </location>
    <ligand>
        <name>ATP</name>
        <dbReference type="ChEBI" id="CHEBI:30616"/>
    </ligand>
</feature>
<feature type="binding site" evidence="1">
    <location>
        <begin position="178"/>
        <end position="179"/>
    </location>
    <ligand>
        <name>ATP</name>
        <dbReference type="ChEBI" id="CHEBI:30616"/>
    </ligand>
</feature>
<feature type="binding site" evidence="1">
    <location>
        <position position="187"/>
    </location>
    <ligand>
        <name>ATP</name>
        <dbReference type="ChEBI" id="CHEBI:30616"/>
    </ligand>
</feature>
<feature type="binding site" evidence="1">
    <location>
        <begin position="211"/>
        <end position="213"/>
    </location>
    <ligand>
        <name>ATP</name>
        <dbReference type="ChEBI" id="CHEBI:30616"/>
    </ligand>
</feature>
<feature type="binding site" evidence="1">
    <location>
        <position position="248"/>
    </location>
    <ligand>
        <name>Mg(2+)</name>
        <dbReference type="ChEBI" id="CHEBI:18420"/>
        <label>1</label>
    </ligand>
</feature>
<feature type="binding site" evidence="1">
    <location>
        <position position="248"/>
    </location>
    <ligand>
        <name>Mn(2+)</name>
        <dbReference type="ChEBI" id="CHEBI:29035"/>
        <label>1</label>
    </ligand>
</feature>
<feature type="binding site" evidence="1">
    <location>
        <position position="260"/>
    </location>
    <ligand>
        <name>Mg(2+)</name>
        <dbReference type="ChEBI" id="CHEBI:18420"/>
        <label>1</label>
    </ligand>
</feature>
<feature type="binding site" evidence="1">
    <location>
        <position position="260"/>
    </location>
    <ligand>
        <name>Mg(2+)</name>
        <dbReference type="ChEBI" id="CHEBI:18420"/>
        <label>2</label>
    </ligand>
</feature>
<feature type="binding site" evidence="1">
    <location>
        <position position="260"/>
    </location>
    <ligand>
        <name>Mn(2+)</name>
        <dbReference type="ChEBI" id="CHEBI:29035"/>
        <label>1</label>
    </ligand>
</feature>
<feature type="binding site" evidence="1">
    <location>
        <position position="260"/>
    </location>
    <ligand>
        <name>Mn(2+)</name>
        <dbReference type="ChEBI" id="CHEBI:29035"/>
        <label>2</label>
    </ligand>
</feature>
<feature type="binding site" evidence="1">
    <location>
        <position position="262"/>
    </location>
    <ligand>
        <name>Mg(2+)</name>
        <dbReference type="ChEBI" id="CHEBI:18420"/>
        <label>2</label>
    </ligand>
</feature>
<feature type="binding site" evidence="1">
    <location>
        <position position="262"/>
    </location>
    <ligand>
        <name>Mn(2+)</name>
        <dbReference type="ChEBI" id="CHEBI:29035"/>
        <label>2</label>
    </ligand>
</feature>
<keyword id="KW-0067">ATP-binding</keyword>
<keyword id="KW-0436">Ligase</keyword>
<keyword id="KW-0460">Magnesium</keyword>
<keyword id="KW-0464">Manganese</keyword>
<keyword id="KW-0479">Metal-binding</keyword>
<keyword id="KW-0547">Nucleotide-binding</keyword>
<keyword id="KW-0648">Protein biosynthesis</keyword>
<organism>
    <name type="scientific">Shewanella sp. (strain W3-18-1)</name>
    <dbReference type="NCBI Taxonomy" id="351745"/>
    <lineage>
        <taxon>Bacteria</taxon>
        <taxon>Pseudomonadati</taxon>
        <taxon>Pseudomonadota</taxon>
        <taxon>Gammaproteobacteria</taxon>
        <taxon>Alteromonadales</taxon>
        <taxon>Shewanellaceae</taxon>
        <taxon>Shewanella</taxon>
    </lineage>
</organism>
<comment type="cofactor">
    <cofactor evidence="1">
        <name>Mg(2+)</name>
        <dbReference type="ChEBI" id="CHEBI:18420"/>
    </cofactor>
    <cofactor evidence="1">
        <name>Mn(2+)</name>
        <dbReference type="ChEBI" id="CHEBI:29035"/>
    </cofactor>
    <text evidence="1">Binds 2 magnesium or manganese ions per subunit.</text>
</comment>
<comment type="similarity">
    <text evidence="1">Belongs to the RimK family.</text>
</comment>